<organismHost>
    <name type="scientific">Escherichia coli</name>
    <dbReference type="NCBI Taxonomy" id="562"/>
</organismHost>
<reference key="1">
    <citation type="journal article" date="1982" name="J. Mol. Biol.">
        <title>Nucleotide sequence of bacteriophage lambda DNA.</title>
        <authorList>
            <person name="Sanger F."/>
            <person name="Coulson A.R."/>
            <person name="Hong G.F."/>
            <person name="Hill D.F."/>
            <person name="Petersen G.B."/>
        </authorList>
    </citation>
    <scope>NUCLEOTIDE SEQUENCE [LARGE SCALE GENOMIC DNA]</scope>
</reference>
<sequence>MARQRRSITDIICENCKYLPTKRTRNKPKPIPKESDVKTFNYTAHLWDIRWLRRRARKTR</sequence>
<name>NINE_LAMBD</name>
<accession>P03768</accession>
<evidence type="ECO:0000305" key="1"/>
<proteinExistence type="inferred from homology"/>
<protein>
    <recommendedName>
        <fullName>Protein ninE</fullName>
    </recommendedName>
    <alternativeName>
        <fullName>Nin60</fullName>
    </alternativeName>
</protein>
<organism>
    <name type="scientific">Escherichia phage lambda</name>
    <name type="common">Bacteriophage lambda</name>
    <dbReference type="NCBI Taxonomy" id="2681611"/>
    <lineage>
        <taxon>Viruses</taxon>
        <taxon>Duplodnaviria</taxon>
        <taxon>Heunggongvirae</taxon>
        <taxon>Uroviricota</taxon>
        <taxon>Caudoviricetes</taxon>
        <taxon>Lambdavirus</taxon>
        <taxon>Lambdavirus lambda</taxon>
    </lineage>
</organism>
<keyword id="KW-1185">Reference proteome</keyword>
<comment type="similarity">
    <text evidence="1">Belongs to the ninE family.</text>
</comment>
<dbReference type="EMBL" id="J02459">
    <property type="protein sequence ID" value="AAA96590.1"/>
    <property type="molecule type" value="Genomic_DNA"/>
</dbReference>
<dbReference type="PIR" id="C43011">
    <property type="entry name" value="QXBP7L"/>
</dbReference>
<dbReference type="RefSeq" id="NP_040637.1">
    <property type="nucleotide sequence ID" value="NC_001416.1"/>
</dbReference>
<dbReference type="IntAct" id="P03768">
    <property type="interactions" value="1"/>
</dbReference>
<dbReference type="GeneID" id="2703500"/>
<dbReference type="KEGG" id="vg:2703500"/>
<dbReference type="Proteomes" id="UP000001711">
    <property type="component" value="Genome"/>
</dbReference>
<dbReference type="InterPro" id="IPR007986">
    <property type="entry name" value="NINE"/>
</dbReference>
<dbReference type="Pfam" id="PF05322">
    <property type="entry name" value="NinE"/>
    <property type="match status" value="1"/>
</dbReference>
<gene>
    <name type="primary">ninE</name>
</gene>
<feature type="chain" id="PRO_0000077614" description="Protein ninE">
    <location>
        <begin position="1"/>
        <end position="60"/>
    </location>
</feature>